<keyword id="KW-0414">Isoprene biosynthesis</keyword>
<keyword id="KW-0456">Lyase</keyword>
<keyword id="KW-1185">Reference proteome</keyword>
<dbReference type="EC" id="4.2.1.182" evidence="1"/>
<dbReference type="EMBL" id="L77117">
    <property type="protein sequence ID" value="AAB99415.1"/>
    <property type="molecule type" value="Genomic_DNA"/>
</dbReference>
<dbReference type="PIR" id="F64475">
    <property type="entry name" value="F64475"/>
</dbReference>
<dbReference type="RefSeq" id="WP_010870924.1">
    <property type="nucleotide sequence ID" value="NC_000909.1"/>
</dbReference>
<dbReference type="SMR" id="Q58802"/>
<dbReference type="FunCoup" id="Q58802">
    <property type="interactions" value="11"/>
</dbReference>
<dbReference type="STRING" id="243232.MJ_1407"/>
<dbReference type="PaxDb" id="243232-MJ_1407"/>
<dbReference type="EnsemblBacteria" id="AAB99415">
    <property type="protein sequence ID" value="AAB99415"/>
    <property type="gene ID" value="MJ_1407"/>
</dbReference>
<dbReference type="GeneID" id="1452310"/>
<dbReference type="KEGG" id="mja:MJ_1407"/>
<dbReference type="eggNOG" id="arCOG04279">
    <property type="taxonomic scope" value="Archaea"/>
</dbReference>
<dbReference type="HOGENOM" id="CLU_141583_2_0_2"/>
<dbReference type="InParanoid" id="Q58802"/>
<dbReference type="OrthoDB" id="18062at2157"/>
<dbReference type="PhylomeDB" id="Q58802"/>
<dbReference type="UniPathway" id="UPA00057"/>
<dbReference type="Proteomes" id="UP000000805">
    <property type="component" value="Chromosome"/>
</dbReference>
<dbReference type="GO" id="GO:0016836">
    <property type="term" value="F:hydro-lyase activity"/>
    <property type="evidence" value="ECO:0007669"/>
    <property type="project" value="UniProtKB-UniRule"/>
</dbReference>
<dbReference type="GO" id="GO:0019287">
    <property type="term" value="P:isopentenyl diphosphate biosynthetic process, mevalonate pathway"/>
    <property type="evidence" value="ECO:0007669"/>
    <property type="project" value="UniProtKB-UniRule"/>
</dbReference>
<dbReference type="CDD" id="cd01356">
    <property type="entry name" value="AcnX_swivel"/>
    <property type="match status" value="1"/>
</dbReference>
<dbReference type="Gene3D" id="3.50.30.10">
    <property type="entry name" value="Phosphohistidine domain"/>
    <property type="match status" value="1"/>
</dbReference>
<dbReference type="HAMAP" id="MF_00078">
    <property type="entry name" value="PMDh_S"/>
    <property type="match status" value="1"/>
</dbReference>
<dbReference type="InterPro" id="IPR012016">
    <property type="entry name" value="PMDh-S-like"/>
</dbReference>
<dbReference type="InterPro" id="IPR002840">
    <property type="entry name" value="PMDh-S-like_dom"/>
</dbReference>
<dbReference type="InterPro" id="IPR020794">
    <property type="entry name" value="PMDh_S"/>
</dbReference>
<dbReference type="NCBIfam" id="NF003046">
    <property type="entry name" value="PRK03955.1"/>
    <property type="match status" value="1"/>
</dbReference>
<dbReference type="PANTHER" id="PTHR36577">
    <property type="entry name" value="DUF521 DOMAIN PROTEIN (AFU_ORTHOLOGUE AFUA_6G00490)"/>
    <property type="match status" value="1"/>
</dbReference>
<dbReference type="PANTHER" id="PTHR36577:SF3">
    <property type="entry name" value="DUF521 DOMAIN PROTEIN (AFU_ORTHOLOGUE AFUA_6G00490)"/>
    <property type="match status" value="1"/>
</dbReference>
<dbReference type="Pfam" id="PF01989">
    <property type="entry name" value="AcnX_swivel_put"/>
    <property type="match status" value="1"/>
</dbReference>
<dbReference type="PIRSF" id="PIRSF004966">
    <property type="entry name" value="UCP004966"/>
    <property type="match status" value="1"/>
</dbReference>
<dbReference type="SUPFAM" id="SSF52016">
    <property type="entry name" value="LeuD/IlvD-like"/>
    <property type="match status" value="1"/>
</dbReference>
<organism>
    <name type="scientific">Methanocaldococcus jannaschii (strain ATCC 43067 / DSM 2661 / JAL-1 / JCM 10045 / NBRC 100440)</name>
    <name type="common">Methanococcus jannaschii</name>
    <dbReference type="NCBI Taxonomy" id="243232"/>
    <lineage>
        <taxon>Archaea</taxon>
        <taxon>Methanobacteriati</taxon>
        <taxon>Methanobacteriota</taxon>
        <taxon>Methanomada group</taxon>
        <taxon>Methanococci</taxon>
        <taxon>Methanococcales</taxon>
        <taxon>Methanocaldococcaceae</taxon>
        <taxon>Methanocaldococcus</taxon>
    </lineage>
</organism>
<proteinExistence type="inferred from homology"/>
<protein>
    <recommendedName>
        <fullName evidence="1">Phosphomevalonate dehydratase small subunit</fullName>
        <shortName evidence="1">PMDh small subunit</shortName>
        <shortName evidence="1">PMDh-S</shortName>
        <ecNumber evidence="1">4.2.1.182</ecNumber>
    </recommendedName>
</protein>
<feature type="chain" id="PRO_0000152565" description="Phosphomevalonate dehydratase small subunit">
    <location>
        <begin position="1"/>
        <end position="129"/>
    </location>
</feature>
<feature type="active site" description="Proton acceptor" evidence="1">
    <location>
        <position position="61"/>
    </location>
</feature>
<reference key="1">
    <citation type="journal article" date="1996" name="Science">
        <title>Complete genome sequence of the methanogenic archaeon, Methanococcus jannaschii.</title>
        <authorList>
            <person name="Bult C.J."/>
            <person name="White O."/>
            <person name="Olsen G.J."/>
            <person name="Zhou L."/>
            <person name="Fleischmann R.D."/>
            <person name="Sutton G.G."/>
            <person name="Blake J.A."/>
            <person name="FitzGerald L.M."/>
            <person name="Clayton R.A."/>
            <person name="Gocayne J.D."/>
            <person name="Kerlavage A.R."/>
            <person name="Dougherty B.A."/>
            <person name="Tomb J.-F."/>
            <person name="Adams M.D."/>
            <person name="Reich C.I."/>
            <person name="Overbeek R."/>
            <person name="Kirkness E.F."/>
            <person name="Weinstock K.G."/>
            <person name="Merrick J.M."/>
            <person name="Glodek A."/>
            <person name="Scott J.L."/>
            <person name="Geoghagen N.S.M."/>
            <person name="Weidman J.F."/>
            <person name="Fuhrmann J.L."/>
            <person name="Nguyen D."/>
            <person name="Utterback T.R."/>
            <person name="Kelley J.M."/>
            <person name="Peterson J.D."/>
            <person name="Sadow P.W."/>
            <person name="Hanna M.C."/>
            <person name="Cotton M.D."/>
            <person name="Roberts K.M."/>
            <person name="Hurst M.A."/>
            <person name="Kaine B.P."/>
            <person name="Borodovsky M."/>
            <person name="Klenk H.-P."/>
            <person name="Fraser C.M."/>
            <person name="Smith H.O."/>
            <person name="Woese C.R."/>
            <person name="Venter J.C."/>
        </authorList>
    </citation>
    <scope>NUCLEOTIDE SEQUENCE [LARGE SCALE GENOMIC DNA]</scope>
    <source>
        <strain>ATCC 43067 / DSM 2661 / JAL-1 / JCM 10045 / NBRC 100440</strain>
    </source>
</reference>
<name>PMDHS_METJA</name>
<evidence type="ECO:0000255" key="1">
    <source>
        <dbReference type="HAMAP-Rule" id="MF_00078"/>
    </source>
</evidence>
<accession>Q58802</accession>
<gene>
    <name type="ordered locus">MJ1407</name>
</gene>
<sequence length="129" mass="13724">MELKGRSISKGIIEGIAIVSKKPFSFLGGVDEEGNIIDKDSDLYGQSLKGKIFVFPYGRGSTVGSYVIYGLAKRGILKGIVNKECEPIVATGAILGGIPLVDKIDIEEIKTGDRIVVDGNTGVVKILNK</sequence>
<comment type="function">
    <text evidence="1">Component of a hydro-lyase that catalyzes the dehydration of mevalonate 5-phosphate (MVA5P) to form trans-anhydromevalonate 5-phosphate (tAHMP). Involved in the archaeal mevalonate (MVA) pathway, which provides fundamental precursors for isoprenoid biosynthesis, such as isopentenyl diphosphate (IPP) and dimethylallyl diphosphate (DMAPP).</text>
</comment>
<comment type="catalytic activity">
    <reaction evidence="1">
        <text>(R)-5-phosphomevalonate = (2E)-3-methyl-5-phosphooxypent-2-enoate + H2O</text>
        <dbReference type="Rhea" id="RHEA:78975"/>
        <dbReference type="ChEBI" id="CHEBI:15377"/>
        <dbReference type="ChEBI" id="CHEBI:58146"/>
        <dbReference type="ChEBI" id="CHEBI:229665"/>
        <dbReference type="EC" id="4.2.1.182"/>
    </reaction>
    <physiologicalReaction direction="left-to-right" evidence="1">
        <dbReference type="Rhea" id="RHEA:78976"/>
    </physiologicalReaction>
</comment>
<comment type="pathway">
    <text evidence="1">Isoprenoid biosynthesis; isopentenyl diphosphate biosynthesis via mevalonate pathway.</text>
</comment>
<comment type="subunit">
    <text evidence="1">Heterodimer composed of a large subunit (PMDh-L) and a small subunit (PMDh-S).</text>
</comment>
<comment type="similarity">
    <text evidence="1">Belongs to the AcnX type II small subunit family.</text>
</comment>